<dbReference type="EMBL" id="CP001144">
    <property type="protein sequence ID" value="ACH78025.1"/>
    <property type="molecule type" value="Genomic_DNA"/>
</dbReference>
<dbReference type="RefSeq" id="WP_001029758.1">
    <property type="nucleotide sequence ID" value="NC_011205.1"/>
</dbReference>
<dbReference type="SMR" id="B5FJJ2"/>
<dbReference type="GeneID" id="98390419"/>
<dbReference type="KEGG" id="sed:SeD_A3783"/>
<dbReference type="HOGENOM" id="CLU_072439_5_0_6"/>
<dbReference type="Proteomes" id="UP000008322">
    <property type="component" value="Chromosome"/>
</dbReference>
<dbReference type="GO" id="GO:1990904">
    <property type="term" value="C:ribonucleoprotein complex"/>
    <property type="evidence" value="ECO:0007669"/>
    <property type="project" value="UniProtKB-KW"/>
</dbReference>
<dbReference type="GO" id="GO:0005840">
    <property type="term" value="C:ribosome"/>
    <property type="evidence" value="ECO:0007669"/>
    <property type="project" value="UniProtKB-KW"/>
</dbReference>
<dbReference type="GO" id="GO:0019843">
    <property type="term" value="F:rRNA binding"/>
    <property type="evidence" value="ECO:0007669"/>
    <property type="project" value="UniProtKB-UniRule"/>
</dbReference>
<dbReference type="GO" id="GO:0003735">
    <property type="term" value="F:structural constituent of ribosome"/>
    <property type="evidence" value="ECO:0007669"/>
    <property type="project" value="InterPro"/>
</dbReference>
<dbReference type="GO" id="GO:0006412">
    <property type="term" value="P:translation"/>
    <property type="evidence" value="ECO:0007669"/>
    <property type="project" value="UniProtKB-UniRule"/>
</dbReference>
<dbReference type="FunFam" id="3.30.420.80:FF:000001">
    <property type="entry name" value="30S ribosomal protein S11"/>
    <property type="match status" value="1"/>
</dbReference>
<dbReference type="Gene3D" id="3.30.420.80">
    <property type="entry name" value="Ribosomal protein S11"/>
    <property type="match status" value="1"/>
</dbReference>
<dbReference type="HAMAP" id="MF_01310">
    <property type="entry name" value="Ribosomal_uS11"/>
    <property type="match status" value="1"/>
</dbReference>
<dbReference type="InterPro" id="IPR001971">
    <property type="entry name" value="Ribosomal_uS11"/>
</dbReference>
<dbReference type="InterPro" id="IPR019981">
    <property type="entry name" value="Ribosomal_uS11_bac-type"/>
</dbReference>
<dbReference type="InterPro" id="IPR018102">
    <property type="entry name" value="Ribosomal_uS11_CS"/>
</dbReference>
<dbReference type="InterPro" id="IPR036967">
    <property type="entry name" value="Ribosomal_uS11_sf"/>
</dbReference>
<dbReference type="NCBIfam" id="NF003698">
    <property type="entry name" value="PRK05309.1"/>
    <property type="match status" value="1"/>
</dbReference>
<dbReference type="NCBIfam" id="TIGR03632">
    <property type="entry name" value="uS11_bact"/>
    <property type="match status" value="1"/>
</dbReference>
<dbReference type="PANTHER" id="PTHR11759">
    <property type="entry name" value="40S RIBOSOMAL PROTEIN S14/30S RIBOSOMAL PROTEIN S11"/>
    <property type="match status" value="1"/>
</dbReference>
<dbReference type="Pfam" id="PF00411">
    <property type="entry name" value="Ribosomal_S11"/>
    <property type="match status" value="1"/>
</dbReference>
<dbReference type="PIRSF" id="PIRSF002131">
    <property type="entry name" value="Ribosomal_S11"/>
    <property type="match status" value="1"/>
</dbReference>
<dbReference type="SUPFAM" id="SSF53137">
    <property type="entry name" value="Translational machinery components"/>
    <property type="match status" value="1"/>
</dbReference>
<dbReference type="PROSITE" id="PS00054">
    <property type="entry name" value="RIBOSOMAL_S11"/>
    <property type="match status" value="1"/>
</dbReference>
<proteinExistence type="inferred from homology"/>
<organism>
    <name type="scientific">Salmonella dublin (strain CT_02021853)</name>
    <dbReference type="NCBI Taxonomy" id="439851"/>
    <lineage>
        <taxon>Bacteria</taxon>
        <taxon>Pseudomonadati</taxon>
        <taxon>Pseudomonadota</taxon>
        <taxon>Gammaproteobacteria</taxon>
        <taxon>Enterobacterales</taxon>
        <taxon>Enterobacteriaceae</taxon>
        <taxon>Salmonella</taxon>
    </lineage>
</organism>
<feature type="chain" id="PRO_1000141134" description="Small ribosomal subunit protein uS11">
    <location>
        <begin position="1"/>
        <end position="129"/>
    </location>
</feature>
<evidence type="ECO:0000255" key="1">
    <source>
        <dbReference type="HAMAP-Rule" id="MF_01310"/>
    </source>
</evidence>
<evidence type="ECO:0000305" key="2"/>
<sequence length="129" mass="13831">MAKAPVRARKRVRKQVSDGVAHIHASFNNTIVTITDRQGNALGWATAGGSGFRGSRKSTPFAAQVAAERCADAVKEYGIKNLEVMVKGPGPGRESTIRALNAAGFRITNITDVTPIPHNGCRPPKKRRV</sequence>
<reference key="1">
    <citation type="journal article" date="2011" name="J. Bacteriol.">
        <title>Comparative genomics of 28 Salmonella enterica isolates: evidence for CRISPR-mediated adaptive sublineage evolution.</title>
        <authorList>
            <person name="Fricke W.F."/>
            <person name="Mammel M.K."/>
            <person name="McDermott P.F."/>
            <person name="Tartera C."/>
            <person name="White D.G."/>
            <person name="Leclerc J.E."/>
            <person name="Ravel J."/>
            <person name="Cebula T.A."/>
        </authorList>
    </citation>
    <scope>NUCLEOTIDE SEQUENCE [LARGE SCALE GENOMIC DNA]</scope>
    <source>
        <strain>CT_02021853</strain>
    </source>
</reference>
<name>RS11_SALDC</name>
<keyword id="KW-0687">Ribonucleoprotein</keyword>
<keyword id="KW-0689">Ribosomal protein</keyword>
<keyword id="KW-0694">RNA-binding</keyword>
<keyword id="KW-0699">rRNA-binding</keyword>
<protein>
    <recommendedName>
        <fullName evidence="1">Small ribosomal subunit protein uS11</fullName>
    </recommendedName>
    <alternativeName>
        <fullName evidence="2">30S ribosomal protein S11</fullName>
    </alternativeName>
</protein>
<gene>
    <name evidence="1" type="primary">rpsK</name>
    <name type="ordered locus">SeD_A3783</name>
</gene>
<comment type="function">
    <text evidence="1">Located on the platform of the 30S subunit, it bridges several disparate RNA helices of the 16S rRNA. Forms part of the Shine-Dalgarno cleft in the 70S ribosome.</text>
</comment>
<comment type="subunit">
    <text evidence="1">Part of the 30S ribosomal subunit. Interacts with proteins S7 and S18. Binds to IF-3.</text>
</comment>
<comment type="similarity">
    <text evidence="1">Belongs to the universal ribosomal protein uS11 family.</text>
</comment>
<accession>B5FJJ2</accession>